<keyword id="KW-0963">Cytoplasm</keyword>
<keyword id="KW-0275">Fatty acid biosynthesis</keyword>
<keyword id="KW-0276">Fatty acid metabolism</keyword>
<keyword id="KW-0444">Lipid biosynthesis</keyword>
<keyword id="KW-0443">Lipid metabolism</keyword>
<keyword id="KW-0596">Phosphopantetheine</keyword>
<keyword id="KW-0597">Phosphoprotein</keyword>
<keyword id="KW-1185">Reference proteome</keyword>
<sequence>MRELTSEIKKEIRDIVYDFFSEECEVDINELNDNTSVVDDLDGDSLMLIELVDILKKKYSLNIQLQSIGKYLLKNPAETLEKVVQTTYLLYEYENDITNVGEK</sequence>
<proteinExistence type="inferred from homology"/>
<protein>
    <recommendedName>
        <fullName>Acyl carrier protein homolog</fullName>
        <shortName>ACP</shortName>
    </recommendedName>
</protein>
<organism>
    <name type="scientific">Clostridium acetobutylicum (strain ATCC 824 / DSM 792 / JCM 1419 / IAM 19013 / LMG 5710 / NBRC 13948 / NRRL B-527 / VKM B-1787 / 2291 / W)</name>
    <dbReference type="NCBI Taxonomy" id="272562"/>
    <lineage>
        <taxon>Bacteria</taxon>
        <taxon>Bacillati</taxon>
        <taxon>Bacillota</taxon>
        <taxon>Clostridia</taxon>
        <taxon>Eubacteriales</taxon>
        <taxon>Clostridiaceae</taxon>
        <taxon>Clostridium</taxon>
    </lineage>
</organism>
<reference key="1">
    <citation type="journal article" date="2001" name="J. Bacteriol.">
        <title>Genome sequence and comparative analysis of the solvent-producing bacterium Clostridium acetobutylicum.</title>
        <authorList>
            <person name="Noelling J."/>
            <person name="Breton G."/>
            <person name="Omelchenko M.V."/>
            <person name="Makarova K.S."/>
            <person name="Zeng Q."/>
            <person name="Gibson R."/>
            <person name="Lee H.M."/>
            <person name="Dubois J."/>
            <person name="Qiu D."/>
            <person name="Hitti J."/>
            <person name="Wolf Y.I."/>
            <person name="Tatusov R.L."/>
            <person name="Sabathe F."/>
            <person name="Doucette-Stamm L.A."/>
            <person name="Soucaille P."/>
            <person name="Daly M.J."/>
            <person name="Bennett G.N."/>
            <person name="Koonin E.V."/>
            <person name="Smith D.R."/>
        </authorList>
    </citation>
    <scope>NUCLEOTIDE SEQUENCE [LARGE SCALE GENOMIC DNA]</scope>
    <source>
        <strain>ATCC 824 / DSM 792 / JCM 1419 / IAM 19013 / LMG 5710 / NBRC 13948 / NRRL B-527 / VKM B-1787 / 2291 / W</strain>
    </source>
</reference>
<gene>
    <name type="ordered locus">CA_C2017</name>
</gene>
<name>ACPH_CLOAB</name>
<evidence type="ECO:0000250" key="1"/>
<evidence type="ECO:0000255" key="2">
    <source>
        <dbReference type="PROSITE-ProRule" id="PRU00258"/>
    </source>
</evidence>
<evidence type="ECO:0000305" key="3"/>
<feature type="chain" id="PRO_0000180264" description="Acyl carrier protein homolog">
    <location>
        <begin position="1"/>
        <end position="103"/>
    </location>
</feature>
<feature type="domain" description="Carrier" evidence="2">
    <location>
        <begin position="3"/>
        <end position="87"/>
    </location>
</feature>
<feature type="modified residue" description="O-(pantetheine 4'-phosphoryl)serine" evidence="2">
    <location>
        <position position="45"/>
    </location>
</feature>
<comment type="function">
    <text evidence="1">Acyl carrier protein.</text>
</comment>
<comment type="subcellular location">
    <subcellularLocation>
        <location evidence="1">Cytoplasm</location>
    </subcellularLocation>
</comment>
<comment type="PTM">
    <text evidence="3">4'-phosphopantetheine is transferred from CoA to a specific serine of the apo-ACP-like protein.</text>
</comment>
<dbReference type="EMBL" id="AE001437">
    <property type="protein sequence ID" value="AAK79976.1"/>
    <property type="molecule type" value="Genomic_DNA"/>
</dbReference>
<dbReference type="PIR" id="E97148">
    <property type="entry name" value="E97148"/>
</dbReference>
<dbReference type="RefSeq" id="NP_348636.1">
    <property type="nucleotide sequence ID" value="NC_003030.1"/>
</dbReference>
<dbReference type="RefSeq" id="WP_010965317.1">
    <property type="nucleotide sequence ID" value="NC_003030.1"/>
</dbReference>
<dbReference type="SMR" id="Q97HJ4"/>
<dbReference type="STRING" id="272562.CA_C2017"/>
<dbReference type="KEGG" id="cac:CA_C2017"/>
<dbReference type="PATRIC" id="fig|272562.8.peg.2224"/>
<dbReference type="eggNOG" id="COG0236">
    <property type="taxonomic scope" value="Bacteria"/>
</dbReference>
<dbReference type="HOGENOM" id="CLU_2258772_0_0_9"/>
<dbReference type="OrthoDB" id="1821972at2"/>
<dbReference type="Proteomes" id="UP000000814">
    <property type="component" value="Chromosome"/>
</dbReference>
<dbReference type="GO" id="GO:0005737">
    <property type="term" value="C:cytoplasm"/>
    <property type="evidence" value="ECO:0007669"/>
    <property type="project" value="UniProtKB-SubCell"/>
</dbReference>
<dbReference type="GO" id="GO:0006633">
    <property type="term" value="P:fatty acid biosynthetic process"/>
    <property type="evidence" value="ECO:0007669"/>
    <property type="project" value="UniProtKB-KW"/>
</dbReference>
<dbReference type="Gene3D" id="1.10.1200.10">
    <property type="entry name" value="ACP-like"/>
    <property type="match status" value="1"/>
</dbReference>
<dbReference type="InterPro" id="IPR036736">
    <property type="entry name" value="ACP-like_sf"/>
</dbReference>
<dbReference type="InterPro" id="IPR009081">
    <property type="entry name" value="PP-bd_ACP"/>
</dbReference>
<dbReference type="Pfam" id="PF00550">
    <property type="entry name" value="PP-binding"/>
    <property type="match status" value="1"/>
</dbReference>
<dbReference type="SUPFAM" id="SSF47336">
    <property type="entry name" value="ACP-like"/>
    <property type="match status" value="1"/>
</dbReference>
<dbReference type="PROSITE" id="PS50075">
    <property type="entry name" value="CARRIER"/>
    <property type="match status" value="1"/>
</dbReference>
<accession>Q97HJ4</accession>